<evidence type="ECO:0000250" key="1"/>
<evidence type="ECO:0000255" key="2">
    <source>
        <dbReference type="HAMAP-Rule" id="MF_00600"/>
    </source>
</evidence>
<sequence>MAAKDVKFGNDARVKMLRGVNVLADAVKVTLGPKGRNVVLDKSFGAPTITKDGVSVAREIELEDKFENMGAQMVKEVASKANDAAGDGTTTATVLAQAIITEGLKAVAAGMNPMDLKRGIDKAVTAAVEELKALSVPCSDSKAIAQVGTISANSDETVGKLIAEAMDKVGKEGVITVEDGTGLQDELDVVEGMQFDRGYLSPYFINKPETGAVELESPFILLADKKISNIREMLPVLEAVAKAGKPLLIIAEDVEGEALATLVVNTMRGIVKVAAVKAPGFGDRRKAMLQDIATLTGGTVISEEIGMELEKATLEDLGQAKRVVINKDTTTIIDGVGEEAAIQGRVAQIRQQIEEATSDYDREKLQERVAKLAGGVAVIKVGAATEVEMKEKKARVEDALHATRAAVEEGVVAGGGVALIRVASKLADLRGQNEDQNVGIKVALRAMEAPLRQIVLNCGEEPSVVANTVKGGDGNYGYNAATEEYGNMIDMGILDPTKVTRSALQYAASVAGLMITTECMVTDLPKNDAADLGAAGGMGGMGGMGGMM</sequence>
<dbReference type="EC" id="5.6.1.7" evidence="2"/>
<dbReference type="EMBL" id="AE005674">
    <property type="protein sequence ID" value="AAN45715.1"/>
    <property type="molecule type" value="Genomic_DNA"/>
</dbReference>
<dbReference type="EMBL" id="AE014073">
    <property type="protein sequence ID" value="AAP19501.1"/>
    <property type="molecule type" value="Genomic_DNA"/>
</dbReference>
<dbReference type="RefSeq" id="NP_710008.1">
    <property type="nucleotide sequence ID" value="NC_004337.2"/>
</dbReference>
<dbReference type="RefSeq" id="WP_000729117.1">
    <property type="nucleotide sequence ID" value="NZ_WPGW01000108.1"/>
</dbReference>
<dbReference type="SMR" id="P0A6F8"/>
<dbReference type="STRING" id="198214.SF4297"/>
<dbReference type="PaxDb" id="198214-SF4297"/>
<dbReference type="GeneID" id="1025527"/>
<dbReference type="GeneID" id="93777681"/>
<dbReference type="KEGG" id="sfl:SF4297"/>
<dbReference type="KEGG" id="sfx:S4564"/>
<dbReference type="PATRIC" id="fig|198214.7.peg.5067"/>
<dbReference type="HOGENOM" id="CLU_016503_3_0_6"/>
<dbReference type="Proteomes" id="UP000001006">
    <property type="component" value="Chromosome"/>
</dbReference>
<dbReference type="Proteomes" id="UP000002673">
    <property type="component" value="Chromosome"/>
</dbReference>
<dbReference type="GO" id="GO:0005737">
    <property type="term" value="C:cytoplasm"/>
    <property type="evidence" value="ECO:0007669"/>
    <property type="project" value="UniProtKB-SubCell"/>
</dbReference>
<dbReference type="GO" id="GO:0005524">
    <property type="term" value="F:ATP binding"/>
    <property type="evidence" value="ECO:0007669"/>
    <property type="project" value="UniProtKB-UniRule"/>
</dbReference>
<dbReference type="GO" id="GO:0140662">
    <property type="term" value="F:ATP-dependent protein folding chaperone"/>
    <property type="evidence" value="ECO:0007669"/>
    <property type="project" value="InterPro"/>
</dbReference>
<dbReference type="GO" id="GO:0016853">
    <property type="term" value="F:isomerase activity"/>
    <property type="evidence" value="ECO:0007669"/>
    <property type="project" value="UniProtKB-KW"/>
</dbReference>
<dbReference type="GO" id="GO:0051082">
    <property type="term" value="F:unfolded protein binding"/>
    <property type="evidence" value="ECO:0007669"/>
    <property type="project" value="UniProtKB-UniRule"/>
</dbReference>
<dbReference type="GO" id="GO:0042026">
    <property type="term" value="P:protein refolding"/>
    <property type="evidence" value="ECO:0007669"/>
    <property type="project" value="UniProtKB-UniRule"/>
</dbReference>
<dbReference type="CDD" id="cd03344">
    <property type="entry name" value="GroEL"/>
    <property type="match status" value="1"/>
</dbReference>
<dbReference type="FunFam" id="1.10.560.10:FF:000001">
    <property type="entry name" value="60 kDa chaperonin"/>
    <property type="match status" value="1"/>
</dbReference>
<dbReference type="FunFam" id="3.50.7.10:FF:000001">
    <property type="entry name" value="60 kDa chaperonin"/>
    <property type="match status" value="1"/>
</dbReference>
<dbReference type="Gene3D" id="3.50.7.10">
    <property type="entry name" value="GroEL"/>
    <property type="match status" value="1"/>
</dbReference>
<dbReference type="Gene3D" id="1.10.560.10">
    <property type="entry name" value="GroEL-like equatorial domain"/>
    <property type="match status" value="1"/>
</dbReference>
<dbReference type="Gene3D" id="3.30.260.10">
    <property type="entry name" value="TCP-1-like chaperonin intermediate domain"/>
    <property type="match status" value="1"/>
</dbReference>
<dbReference type="HAMAP" id="MF_00600">
    <property type="entry name" value="CH60"/>
    <property type="match status" value="1"/>
</dbReference>
<dbReference type="InterPro" id="IPR018370">
    <property type="entry name" value="Chaperonin_Cpn60_CS"/>
</dbReference>
<dbReference type="InterPro" id="IPR001844">
    <property type="entry name" value="Cpn60/GroEL"/>
</dbReference>
<dbReference type="InterPro" id="IPR002423">
    <property type="entry name" value="Cpn60/GroEL/TCP-1"/>
</dbReference>
<dbReference type="InterPro" id="IPR027409">
    <property type="entry name" value="GroEL-like_apical_dom_sf"/>
</dbReference>
<dbReference type="InterPro" id="IPR027413">
    <property type="entry name" value="GROEL-like_equatorial_sf"/>
</dbReference>
<dbReference type="InterPro" id="IPR027410">
    <property type="entry name" value="TCP-1-like_intermed_sf"/>
</dbReference>
<dbReference type="NCBIfam" id="TIGR02348">
    <property type="entry name" value="GroEL"/>
    <property type="match status" value="1"/>
</dbReference>
<dbReference type="NCBIfam" id="NF000592">
    <property type="entry name" value="PRK00013.1"/>
    <property type="match status" value="1"/>
</dbReference>
<dbReference type="NCBIfam" id="NF009487">
    <property type="entry name" value="PRK12849.1"/>
    <property type="match status" value="1"/>
</dbReference>
<dbReference type="NCBIfam" id="NF009488">
    <property type="entry name" value="PRK12850.1"/>
    <property type="match status" value="1"/>
</dbReference>
<dbReference type="NCBIfam" id="NF009489">
    <property type="entry name" value="PRK12851.1"/>
    <property type="match status" value="1"/>
</dbReference>
<dbReference type="PANTHER" id="PTHR45633">
    <property type="entry name" value="60 KDA HEAT SHOCK PROTEIN, MITOCHONDRIAL"/>
    <property type="match status" value="1"/>
</dbReference>
<dbReference type="Pfam" id="PF00118">
    <property type="entry name" value="Cpn60_TCP1"/>
    <property type="match status" value="1"/>
</dbReference>
<dbReference type="PRINTS" id="PR00298">
    <property type="entry name" value="CHAPERONIN60"/>
</dbReference>
<dbReference type="SUPFAM" id="SSF52029">
    <property type="entry name" value="GroEL apical domain-like"/>
    <property type="match status" value="1"/>
</dbReference>
<dbReference type="SUPFAM" id="SSF48592">
    <property type="entry name" value="GroEL equatorial domain-like"/>
    <property type="match status" value="1"/>
</dbReference>
<dbReference type="SUPFAM" id="SSF54849">
    <property type="entry name" value="GroEL-intermediate domain like"/>
    <property type="match status" value="1"/>
</dbReference>
<dbReference type="PROSITE" id="PS00296">
    <property type="entry name" value="CHAPERONINS_CPN60"/>
    <property type="match status" value="1"/>
</dbReference>
<feature type="initiator methionine" description="Removed" evidence="1">
    <location>
        <position position="1"/>
    </location>
</feature>
<feature type="chain" id="PRO_0000063528" description="Chaperonin GroEL">
    <location>
        <begin position="2"/>
        <end position="548"/>
    </location>
</feature>
<feature type="binding site" evidence="2">
    <location>
        <begin position="30"/>
        <end position="33"/>
    </location>
    <ligand>
        <name>ATP</name>
        <dbReference type="ChEBI" id="CHEBI:30616"/>
    </ligand>
</feature>
<feature type="binding site" evidence="2">
    <location>
        <position position="51"/>
    </location>
    <ligand>
        <name>ATP</name>
        <dbReference type="ChEBI" id="CHEBI:30616"/>
    </ligand>
</feature>
<feature type="binding site" evidence="2">
    <location>
        <begin position="87"/>
        <end position="91"/>
    </location>
    <ligand>
        <name>ATP</name>
        <dbReference type="ChEBI" id="CHEBI:30616"/>
    </ligand>
</feature>
<feature type="binding site" evidence="2">
    <location>
        <position position="415"/>
    </location>
    <ligand>
        <name>ATP</name>
        <dbReference type="ChEBI" id="CHEBI:30616"/>
    </ligand>
</feature>
<feature type="binding site" evidence="2">
    <location>
        <begin position="479"/>
        <end position="481"/>
    </location>
    <ligand>
        <name>ATP</name>
        <dbReference type="ChEBI" id="CHEBI:30616"/>
    </ligand>
</feature>
<feature type="binding site" evidence="2">
    <location>
        <position position="495"/>
    </location>
    <ligand>
        <name>ATP</name>
        <dbReference type="ChEBI" id="CHEBI:30616"/>
    </ligand>
</feature>
<keyword id="KW-0067">ATP-binding</keyword>
<keyword id="KW-0143">Chaperone</keyword>
<keyword id="KW-0963">Cytoplasm</keyword>
<keyword id="KW-0413">Isomerase</keyword>
<keyword id="KW-0547">Nucleotide-binding</keyword>
<keyword id="KW-1185">Reference proteome</keyword>
<protein>
    <recommendedName>
        <fullName evidence="2">Chaperonin GroEL</fullName>
        <ecNumber evidence="2">5.6.1.7</ecNumber>
    </recommendedName>
    <alternativeName>
        <fullName evidence="2">60 kDa chaperonin</fullName>
    </alternativeName>
    <alternativeName>
        <fullName evidence="2">Chaperonin-60</fullName>
        <shortName evidence="2">Cpn60</shortName>
    </alternativeName>
</protein>
<organism>
    <name type="scientific">Shigella flexneri</name>
    <dbReference type="NCBI Taxonomy" id="623"/>
    <lineage>
        <taxon>Bacteria</taxon>
        <taxon>Pseudomonadati</taxon>
        <taxon>Pseudomonadota</taxon>
        <taxon>Gammaproteobacteria</taxon>
        <taxon>Enterobacterales</taxon>
        <taxon>Enterobacteriaceae</taxon>
        <taxon>Shigella</taxon>
    </lineage>
</organism>
<proteinExistence type="inferred from homology"/>
<comment type="function">
    <text evidence="2">Together with its co-chaperonin GroES, plays an essential role in assisting protein folding. The GroEL-GroES system forms a nano-cage that allows encapsulation of the non-native substrate proteins and provides a physical environment optimized to promote and accelerate protein folding.</text>
</comment>
<comment type="catalytic activity">
    <reaction evidence="2">
        <text>ATP + H2O + a folded polypeptide = ADP + phosphate + an unfolded polypeptide.</text>
        <dbReference type="EC" id="5.6.1.7"/>
    </reaction>
</comment>
<comment type="subunit">
    <text evidence="2">Forms a cylinder of 14 subunits composed of two heptameric rings stacked back-to-back. Interacts with the co-chaperonin GroES.</text>
</comment>
<comment type="subcellular location">
    <subcellularLocation>
        <location evidence="2">Cytoplasm</location>
    </subcellularLocation>
</comment>
<comment type="similarity">
    <text evidence="2">Belongs to the chaperonin (HSP60) family.</text>
</comment>
<reference key="1">
    <citation type="journal article" date="2002" name="Nucleic Acids Res.">
        <title>Genome sequence of Shigella flexneri 2a: insights into pathogenicity through comparison with genomes of Escherichia coli K12 and O157.</title>
        <authorList>
            <person name="Jin Q."/>
            <person name="Yuan Z."/>
            <person name="Xu J."/>
            <person name="Wang Y."/>
            <person name="Shen Y."/>
            <person name="Lu W."/>
            <person name="Wang J."/>
            <person name="Liu H."/>
            <person name="Yang J."/>
            <person name="Yang F."/>
            <person name="Zhang X."/>
            <person name="Zhang J."/>
            <person name="Yang G."/>
            <person name="Wu H."/>
            <person name="Qu D."/>
            <person name="Dong J."/>
            <person name="Sun L."/>
            <person name="Xue Y."/>
            <person name="Zhao A."/>
            <person name="Gao Y."/>
            <person name="Zhu J."/>
            <person name="Kan B."/>
            <person name="Ding K."/>
            <person name="Chen S."/>
            <person name="Cheng H."/>
            <person name="Yao Z."/>
            <person name="He B."/>
            <person name="Chen R."/>
            <person name="Ma D."/>
            <person name="Qiang B."/>
            <person name="Wen Y."/>
            <person name="Hou Y."/>
            <person name="Yu J."/>
        </authorList>
    </citation>
    <scope>NUCLEOTIDE SEQUENCE [LARGE SCALE GENOMIC DNA]</scope>
    <source>
        <strain>301 / Serotype 2a</strain>
    </source>
</reference>
<reference key="2">
    <citation type="journal article" date="2003" name="Infect. Immun.">
        <title>Complete genome sequence and comparative genomics of Shigella flexneri serotype 2a strain 2457T.</title>
        <authorList>
            <person name="Wei J."/>
            <person name="Goldberg M.B."/>
            <person name="Burland V."/>
            <person name="Venkatesan M.M."/>
            <person name="Deng W."/>
            <person name="Fournier G."/>
            <person name="Mayhew G.F."/>
            <person name="Plunkett G. III"/>
            <person name="Rose D.J."/>
            <person name="Darling A."/>
            <person name="Mau B."/>
            <person name="Perna N.T."/>
            <person name="Payne S.M."/>
            <person name="Runyen-Janecky L.J."/>
            <person name="Zhou S."/>
            <person name="Schwartz D.C."/>
            <person name="Blattner F.R."/>
        </authorList>
    </citation>
    <scope>NUCLEOTIDE SEQUENCE [LARGE SCALE GENOMIC DNA]</scope>
    <source>
        <strain>ATCC 700930 / 2457T / Serotype 2a</strain>
    </source>
</reference>
<name>CH60_SHIFL</name>
<accession>P0A6F8</accession>
<accession>P06139</accession>
<gene>
    <name evidence="2" type="primary">groEL</name>
    <name evidence="2" type="synonym">groL</name>
    <name type="synonym">mopA</name>
    <name type="ordered locus">SF4297</name>
    <name type="ordered locus">S4564</name>
</gene>